<dbReference type="EMBL" id="BC063901">
    <property type="protein sequence ID" value="AAH63901.1"/>
    <property type="molecule type" value="mRNA"/>
</dbReference>
<dbReference type="RefSeq" id="NP_988844.1">
    <property type="nucleotide sequence ID" value="NM_203513.1"/>
</dbReference>
<dbReference type="SMR" id="Q6P3Q6"/>
<dbReference type="FunCoup" id="Q6P3Q6">
    <property type="interactions" value="4726"/>
</dbReference>
<dbReference type="STRING" id="8364.ENSXETP00000039030"/>
<dbReference type="PaxDb" id="8364-ENSXETP00000011086"/>
<dbReference type="DNASU" id="387331"/>
<dbReference type="GeneID" id="387331"/>
<dbReference type="KEGG" id="xtr:387331"/>
<dbReference type="AGR" id="Xenbase:XB-GENE-1002414"/>
<dbReference type="CTD" id="10087"/>
<dbReference type="Xenbase" id="XB-GENE-1002414">
    <property type="gene designation" value="cert1"/>
</dbReference>
<dbReference type="eggNOG" id="KOG1739">
    <property type="taxonomic scope" value="Eukaryota"/>
</dbReference>
<dbReference type="HOGENOM" id="CLU_017289_0_0_1"/>
<dbReference type="InParanoid" id="Q6P3Q6"/>
<dbReference type="OMA" id="LETCHRI"/>
<dbReference type="OrthoDB" id="2344588at2759"/>
<dbReference type="PhylomeDB" id="Q6P3Q6"/>
<dbReference type="Proteomes" id="UP000008143">
    <property type="component" value="Chromosome 1"/>
</dbReference>
<dbReference type="Bgee" id="ENSXETG00000005085">
    <property type="expression patterns" value="Expressed in 4-cell stage embryo and 12 other cell types or tissues"/>
</dbReference>
<dbReference type="ExpressionAtlas" id="Q6P3Q6">
    <property type="expression patterns" value="baseline"/>
</dbReference>
<dbReference type="GO" id="GO:0005783">
    <property type="term" value="C:endoplasmic reticulum"/>
    <property type="evidence" value="ECO:0007669"/>
    <property type="project" value="UniProtKB-SubCell"/>
</dbReference>
<dbReference type="GO" id="GO:0005794">
    <property type="term" value="C:Golgi apparatus"/>
    <property type="evidence" value="ECO:0007669"/>
    <property type="project" value="UniProtKB-SubCell"/>
</dbReference>
<dbReference type="GO" id="GO:0008289">
    <property type="term" value="F:lipid binding"/>
    <property type="evidence" value="ECO:0007669"/>
    <property type="project" value="InterPro"/>
</dbReference>
<dbReference type="GO" id="GO:0006869">
    <property type="term" value="P:lipid transport"/>
    <property type="evidence" value="ECO:0007669"/>
    <property type="project" value="UniProtKB-KW"/>
</dbReference>
<dbReference type="CDD" id="cd13283">
    <property type="entry name" value="PH_GPBP"/>
    <property type="match status" value="1"/>
</dbReference>
<dbReference type="CDD" id="cd08872">
    <property type="entry name" value="START_STARD11-like"/>
    <property type="match status" value="1"/>
</dbReference>
<dbReference type="FunFam" id="2.30.29.30:FF:000104">
    <property type="entry name" value="collagen type IV alpha-3-binding protein-like isoform X2"/>
    <property type="match status" value="1"/>
</dbReference>
<dbReference type="FunFam" id="3.30.530.20:FF:000003">
    <property type="entry name" value="Collagen type IV alpha-3-binding protein-like protein"/>
    <property type="match status" value="1"/>
</dbReference>
<dbReference type="Gene3D" id="3.30.530.20">
    <property type="match status" value="1"/>
</dbReference>
<dbReference type="Gene3D" id="2.30.29.30">
    <property type="entry name" value="Pleckstrin-homology domain (PH domain)/Phosphotyrosine-binding domain (PTB)"/>
    <property type="match status" value="1"/>
</dbReference>
<dbReference type="InterPro" id="IPR011993">
    <property type="entry name" value="PH-like_dom_sf"/>
</dbReference>
<dbReference type="InterPro" id="IPR001849">
    <property type="entry name" value="PH_domain"/>
</dbReference>
<dbReference type="InterPro" id="IPR041952">
    <property type="entry name" value="STARD11_START"/>
</dbReference>
<dbReference type="InterPro" id="IPR023393">
    <property type="entry name" value="START-like_dom_sf"/>
</dbReference>
<dbReference type="InterPro" id="IPR002913">
    <property type="entry name" value="START_lipid-bd_dom"/>
</dbReference>
<dbReference type="InterPro" id="IPR051213">
    <property type="entry name" value="START_lipid_transfer"/>
</dbReference>
<dbReference type="PANTHER" id="PTHR19308:SF53">
    <property type="entry name" value="CERAMIDE TRANSFER PROTEIN"/>
    <property type="match status" value="1"/>
</dbReference>
<dbReference type="PANTHER" id="PTHR19308">
    <property type="entry name" value="PHOSPHATIDYLCHOLINE TRANSFER PROTEIN"/>
    <property type="match status" value="1"/>
</dbReference>
<dbReference type="Pfam" id="PF00169">
    <property type="entry name" value="PH"/>
    <property type="match status" value="1"/>
</dbReference>
<dbReference type="Pfam" id="PF01852">
    <property type="entry name" value="START"/>
    <property type="match status" value="1"/>
</dbReference>
<dbReference type="SMART" id="SM00233">
    <property type="entry name" value="PH"/>
    <property type="match status" value="1"/>
</dbReference>
<dbReference type="SMART" id="SM00234">
    <property type="entry name" value="START"/>
    <property type="match status" value="1"/>
</dbReference>
<dbReference type="SUPFAM" id="SSF55961">
    <property type="entry name" value="Bet v1-like"/>
    <property type="match status" value="1"/>
</dbReference>
<dbReference type="SUPFAM" id="SSF50729">
    <property type="entry name" value="PH domain-like"/>
    <property type="match status" value="1"/>
</dbReference>
<dbReference type="PROSITE" id="PS50003">
    <property type="entry name" value="PH_DOMAIN"/>
    <property type="match status" value="1"/>
</dbReference>
<dbReference type="PROSITE" id="PS50848">
    <property type="entry name" value="START"/>
    <property type="match status" value="1"/>
</dbReference>
<keyword id="KW-0175">Coiled coil</keyword>
<keyword id="KW-0963">Cytoplasm</keyword>
<keyword id="KW-0256">Endoplasmic reticulum</keyword>
<keyword id="KW-0333">Golgi apparatus</keyword>
<keyword id="KW-0445">Lipid transport</keyword>
<keyword id="KW-1185">Reference proteome</keyword>
<keyword id="KW-0813">Transport</keyword>
<comment type="function">
    <text evidence="2">May mediate the intracellular trafficking of ceramide in a non-vesicular manner.</text>
</comment>
<comment type="catalytic activity">
    <reaction evidence="1">
        <text>N-hexadecanoylsphing-4-enine(in) = N-hexadecanoylsphing-4-enine(out)</text>
        <dbReference type="Rhea" id="RHEA:45720"/>
        <dbReference type="ChEBI" id="CHEBI:72959"/>
    </reaction>
</comment>
<comment type="subcellular location">
    <subcellularLocation>
        <location evidence="2">Cytoplasm</location>
    </subcellularLocation>
    <subcellularLocation>
        <location evidence="2">Golgi apparatus</location>
    </subcellularLocation>
    <subcellularLocation>
        <location evidence="2">Endoplasmic reticulum</location>
    </subcellularLocation>
</comment>
<comment type="domain">
    <text evidence="2">The START domain recognizes ceramide and mediates the intermembrane transfer of ceramide.</text>
</comment>
<comment type="domain">
    <text evidence="2">The PH domain targets the Golgi apparatus.</text>
</comment>
<feature type="chain" id="PRO_0000307358" description="Ceramide transfer protein">
    <location>
        <begin position="1"/>
        <end position="617"/>
    </location>
</feature>
<feature type="domain" description="PH" evidence="4">
    <location>
        <begin position="23"/>
        <end position="117"/>
    </location>
</feature>
<feature type="domain" description="START" evidence="5">
    <location>
        <begin position="383"/>
        <end position="611"/>
    </location>
</feature>
<feature type="region of interest" description="Disordered" evidence="6">
    <location>
        <begin position="1"/>
        <end position="23"/>
    </location>
</feature>
<feature type="region of interest" description="Disordered" evidence="6">
    <location>
        <begin position="332"/>
        <end position="355"/>
    </location>
</feature>
<feature type="coiled-coil region" evidence="3">
    <location>
        <begin position="268"/>
        <end position="302"/>
    </location>
</feature>
<feature type="short sequence motif" description="FFAT" evidence="2">
    <location>
        <begin position="320"/>
        <end position="326"/>
    </location>
</feature>
<feature type="compositionally biased region" description="Polar residues" evidence="6">
    <location>
        <begin position="1"/>
        <end position="11"/>
    </location>
</feature>
<feature type="compositionally biased region" description="Basic and acidic residues" evidence="6">
    <location>
        <begin position="332"/>
        <end position="344"/>
    </location>
</feature>
<feature type="binding site" evidence="2">
    <location>
        <position position="466"/>
    </location>
    <ligand>
        <name>an N-acylsphing-4-enine</name>
        <dbReference type="ChEBI" id="CHEBI:52639"/>
    </ligand>
</feature>
<feature type="binding site" evidence="2">
    <location>
        <position position="487"/>
    </location>
    <ligand>
        <name>an N-acylsphing-4-enine</name>
        <dbReference type="ChEBI" id="CHEBI:52639"/>
    </ligand>
</feature>
<feature type="binding site" evidence="2">
    <location>
        <position position="524"/>
    </location>
    <ligand>
        <name>an N-acylsphing-4-enine</name>
        <dbReference type="ChEBI" id="CHEBI:52639"/>
    </ligand>
</feature>
<feature type="binding site" evidence="2">
    <location>
        <position position="572"/>
    </location>
    <ligand>
        <name>an N-acylsphing-4-enine</name>
        <dbReference type="ChEBI" id="CHEBI:52639"/>
    </ligand>
</feature>
<reference key="1">
    <citation type="submission" date="2003-12" db="EMBL/GenBank/DDBJ databases">
        <authorList>
            <consortium name="NIH - Xenopus Gene Collection (XGC) project"/>
        </authorList>
    </citation>
    <scope>NUCLEOTIDE SEQUENCE [LARGE SCALE MRNA]</scope>
    <source>
        <tissue>Embryo</tissue>
    </source>
</reference>
<name>CERT_XENTR</name>
<gene>
    <name type="primary">cert1</name>
    <name type="synonym">cert</name>
    <name type="synonym">col4a3bp</name>
</gene>
<evidence type="ECO:0000250" key="1">
    <source>
        <dbReference type="UniProtKB" id="Q6VVX2"/>
    </source>
</evidence>
<evidence type="ECO:0000250" key="2">
    <source>
        <dbReference type="UniProtKB" id="Q9Y5P4"/>
    </source>
</evidence>
<evidence type="ECO:0000255" key="3"/>
<evidence type="ECO:0000255" key="4">
    <source>
        <dbReference type="PROSITE-ProRule" id="PRU00145"/>
    </source>
</evidence>
<evidence type="ECO:0000255" key="5">
    <source>
        <dbReference type="PROSITE-ProRule" id="PRU00197"/>
    </source>
</evidence>
<evidence type="ECO:0000256" key="6">
    <source>
        <dbReference type="SAM" id="MobiDB-lite"/>
    </source>
</evidence>
<evidence type="ECO:0000305" key="7"/>
<organism>
    <name type="scientific">Xenopus tropicalis</name>
    <name type="common">Western clawed frog</name>
    <name type="synonym">Silurana tropicalis</name>
    <dbReference type="NCBI Taxonomy" id="8364"/>
    <lineage>
        <taxon>Eukaryota</taxon>
        <taxon>Metazoa</taxon>
        <taxon>Chordata</taxon>
        <taxon>Craniata</taxon>
        <taxon>Vertebrata</taxon>
        <taxon>Euteleostomi</taxon>
        <taxon>Amphibia</taxon>
        <taxon>Batrachia</taxon>
        <taxon>Anura</taxon>
        <taxon>Pipoidea</taxon>
        <taxon>Pipidae</taxon>
        <taxon>Xenopodinae</taxon>
        <taxon>Xenopus</taxon>
        <taxon>Silurana</taxon>
    </lineage>
</organism>
<protein>
    <recommendedName>
        <fullName evidence="7">Ceramide transfer protein</fullName>
        <shortName>CERT</shortName>
    </recommendedName>
    <alternativeName>
        <fullName>Collagen type IV alpha-3-binding protein</fullName>
    </alternativeName>
</protein>
<sequence>MSDNQSWNSSGSEEDLETESGPPVERCGVLSKWTNYIHGWQDRWVVLKNNTLSYYKSEDETEYGCRGSICLSKAVITPHEFDECRFDISVNDSVWYLRAQDPDHRQRWIDSIEQHKSESGYGSESSLRRHGSMVSLVSGASGYSATSTSSFKKGHSLREKLAEMETFRDILCRQVDTLQKYFDACADAVSKDELERDKVEDDEDDFLHSHPNGDYIHSSIGSKDKLFQHVSPKGINGIDFKGEAITFKATTAGILATLSHCIDLMVKREDSWQKRLDKEIEKRRRVEEAYKNAMTELKKKSHFGGPDYEEGPNSLINEEEFFDAVEAALDRQDKIEQSQSEKGRSHWPSSLPSTEAYTTAGSHRFVQAPPSCPPPTDLVSSSDEHRFRIQVEEMVQNHMTYSLQDVGGDANWQLVVEEGEMKVYRREVEENGIVLDPLKATHSVKGVTGHEVCQHFWNVDVRNDWETTIENFHVVEKLSPNAIIVYQTHKRVWPASQRDVLYLSAIRMVPAASENEMDTWIVCNFSVDHDNAPLNRCVRAKINIAMICQTLVSPPEGNKEISRDNIQCKITYVANVNPGGWAPASVLRAVAKREYPKFLKRFTSYVQEKTAGKSILF</sequence>
<proteinExistence type="evidence at transcript level"/>
<accession>Q6P3Q6</accession>